<sequence length="307" mass="33919">MQYSTLAGQTDNSLVSNNFGFLRLPLNFMPYESHADWVITGVPYDMAVSGRSGARFGPEAIRRASVNLAWEHRRFPWTFDVRERLNIIDCGDLVFSFGDSRDFVEKMEAHAGKLLSSGKRCLSLGGDHFITLPLLRAHARYFGKLALIHFDAHTDTYDNGSEYDHGTMFYTAPKEGLIDPSRSVQIGIRTEHSKKLPFTVLTAPQVNEDSVEETVRKIKETVGNMPVYLTFDIDCLDPSFAPGTGTPVCGGLSSDRALKILRGLTDLDIVGMDVVEVAPSYDQSDITALAGATIALEMLYLQGAKKD</sequence>
<dbReference type="EC" id="3.5.3.11" evidence="1"/>
<dbReference type="EMBL" id="CP000381">
    <property type="protein sequence ID" value="ABX74248.1"/>
    <property type="molecule type" value="Genomic_DNA"/>
</dbReference>
<dbReference type="RefSeq" id="WP_002220414.1">
    <property type="nucleotide sequence ID" value="NC_010120.1"/>
</dbReference>
<dbReference type="SMR" id="A9M254"/>
<dbReference type="KEGG" id="nmn:NMCC_1673"/>
<dbReference type="HOGENOM" id="CLU_039478_0_0_4"/>
<dbReference type="UniPathway" id="UPA00534">
    <property type="reaction ID" value="UER00287"/>
</dbReference>
<dbReference type="Proteomes" id="UP000001177">
    <property type="component" value="Chromosome"/>
</dbReference>
<dbReference type="GO" id="GO:0008783">
    <property type="term" value="F:agmatinase activity"/>
    <property type="evidence" value="ECO:0007669"/>
    <property type="project" value="UniProtKB-UniRule"/>
</dbReference>
<dbReference type="GO" id="GO:0030145">
    <property type="term" value="F:manganese ion binding"/>
    <property type="evidence" value="ECO:0007669"/>
    <property type="project" value="InterPro"/>
</dbReference>
<dbReference type="GO" id="GO:0033389">
    <property type="term" value="P:putrescine biosynthetic process from arginine, via agmatine"/>
    <property type="evidence" value="ECO:0007669"/>
    <property type="project" value="TreeGrafter"/>
</dbReference>
<dbReference type="GO" id="GO:0008295">
    <property type="term" value="P:spermidine biosynthetic process"/>
    <property type="evidence" value="ECO:0007669"/>
    <property type="project" value="UniProtKB-UniRule"/>
</dbReference>
<dbReference type="CDD" id="cd11592">
    <property type="entry name" value="Agmatinase_PAH"/>
    <property type="match status" value="1"/>
</dbReference>
<dbReference type="FunFam" id="3.40.800.10:FF:000001">
    <property type="entry name" value="Agmatinase"/>
    <property type="match status" value="1"/>
</dbReference>
<dbReference type="Gene3D" id="3.40.800.10">
    <property type="entry name" value="Ureohydrolase domain"/>
    <property type="match status" value="1"/>
</dbReference>
<dbReference type="HAMAP" id="MF_01418">
    <property type="entry name" value="SpeB"/>
    <property type="match status" value="1"/>
</dbReference>
<dbReference type="InterPro" id="IPR023694">
    <property type="entry name" value="Agmatinase"/>
</dbReference>
<dbReference type="InterPro" id="IPR005925">
    <property type="entry name" value="Agmatinase-rel"/>
</dbReference>
<dbReference type="InterPro" id="IPR006035">
    <property type="entry name" value="Ureohydrolase"/>
</dbReference>
<dbReference type="InterPro" id="IPR023696">
    <property type="entry name" value="Ureohydrolase_dom_sf"/>
</dbReference>
<dbReference type="InterPro" id="IPR020855">
    <property type="entry name" value="Ureohydrolase_Mn_BS"/>
</dbReference>
<dbReference type="NCBIfam" id="TIGR01230">
    <property type="entry name" value="agmatinase"/>
    <property type="match status" value="1"/>
</dbReference>
<dbReference type="NCBIfam" id="NF002564">
    <property type="entry name" value="PRK02190.1"/>
    <property type="match status" value="1"/>
</dbReference>
<dbReference type="PANTHER" id="PTHR11358">
    <property type="entry name" value="ARGINASE/AGMATINASE"/>
    <property type="match status" value="1"/>
</dbReference>
<dbReference type="PANTHER" id="PTHR11358:SF26">
    <property type="entry name" value="GUANIDINO ACID HYDROLASE, MITOCHONDRIAL"/>
    <property type="match status" value="1"/>
</dbReference>
<dbReference type="Pfam" id="PF00491">
    <property type="entry name" value="Arginase"/>
    <property type="match status" value="1"/>
</dbReference>
<dbReference type="PIRSF" id="PIRSF036979">
    <property type="entry name" value="Arginase"/>
    <property type="match status" value="1"/>
</dbReference>
<dbReference type="SUPFAM" id="SSF52768">
    <property type="entry name" value="Arginase/deacetylase"/>
    <property type="match status" value="1"/>
</dbReference>
<dbReference type="PROSITE" id="PS01053">
    <property type="entry name" value="ARGINASE_1"/>
    <property type="match status" value="1"/>
</dbReference>
<dbReference type="PROSITE" id="PS51409">
    <property type="entry name" value="ARGINASE_2"/>
    <property type="match status" value="1"/>
</dbReference>
<gene>
    <name evidence="1" type="primary">speB</name>
    <name type="ordered locus">NMCC_1673</name>
</gene>
<reference key="1">
    <citation type="journal article" date="2008" name="Genomics">
        <title>Characterization of ST-4821 complex, a unique Neisseria meningitidis clone.</title>
        <authorList>
            <person name="Peng J."/>
            <person name="Yang L."/>
            <person name="Yang F."/>
            <person name="Yang J."/>
            <person name="Yan Y."/>
            <person name="Nie H."/>
            <person name="Zhang X."/>
            <person name="Xiong Z."/>
            <person name="Jiang Y."/>
            <person name="Cheng F."/>
            <person name="Xu X."/>
            <person name="Chen S."/>
            <person name="Sun L."/>
            <person name="Li W."/>
            <person name="Shen Y."/>
            <person name="Shao Z."/>
            <person name="Liang X."/>
            <person name="Xu J."/>
            <person name="Jin Q."/>
        </authorList>
    </citation>
    <scope>NUCLEOTIDE SEQUENCE [LARGE SCALE GENOMIC DNA]</scope>
    <source>
        <strain>053442</strain>
    </source>
</reference>
<protein>
    <recommendedName>
        <fullName evidence="1">Agmatinase</fullName>
        <ecNumber evidence="1">3.5.3.11</ecNumber>
    </recommendedName>
    <alternativeName>
        <fullName evidence="1">Agmatine ureohydrolase</fullName>
        <shortName evidence="1">AUH</shortName>
    </alternativeName>
</protein>
<name>SPEB_NEIM0</name>
<proteinExistence type="inferred from homology"/>
<evidence type="ECO:0000255" key="1">
    <source>
        <dbReference type="HAMAP-Rule" id="MF_01418"/>
    </source>
</evidence>
<comment type="function">
    <text evidence="1">Catalyzes the formation of putrescine from agmatine.</text>
</comment>
<comment type="catalytic activity">
    <reaction evidence="1">
        <text>agmatine + H2O = urea + putrescine</text>
        <dbReference type="Rhea" id="RHEA:13929"/>
        <dbReference type="ChEBI" id="CHEBI:15377"/>
        <dbReference type="ChEBI" id="CHEBI:16199"/>
        <dbReference type="ChEBI" id="CHEBI:58145"/>
        <dbReference type="ChEBI" id="CHEBI:326268"/>
        <dbReference type="EC" id="3.5.3.11"/>
    </reaction>
</comment>
<comment type="cofactor">
    <cofactor evidence="1">
        <name>Mn(2+)</name>
        <dbReference type="ChEBI" id="CHEBI:29035"/>
    </cofactor>
</comment>
<comment type="pathway">
    <text evidence="1">Amine and polyamine biosynthesis; putrescine biosynthesis via agmatine pathway; putrescine from agmatine: step 1/1.</text>
</comment>
<comment type="similarity">
    <text evidence="1">Belongs to the arginase family. Agmatinase subfamily.</text>
</comment>
<organism>
    <name type="scientific">Neisseria meningitidis serogroup C (strain 053442)</name>
    <dbReference type="NCBI Taxonomy" id="374833"/>
    <lineage>
        <taxon>Bacteria</taxon>
        <taxon>Pseudomonadati</taxon>
        <taxon>Pseudomonadota</taxon>
        <taxon>Betaproteobacteria</taxon>
        <taxon>Neisseriales</taxon>
        <taxon>Neisseriaceae</taxon>
        <taxon>Neisseria</taxon>
    </lineage>
</organism>
<feature type="chain" id="PRO_1000087411" description="Agmatinase">
    <location>
        <begin position="1"/>
        <end position="307"/>
    </location>
</feature>
<feature type="binding site" evidence="1">
    <location>
        <position position="128"/>
    </location>
    <ligand>
        <name>Mn(2+)</name>
        <dbReference type="ChEBI" id="CHEBI:29035"/>
    </ligand>
</feature>
<feature type="binding site" evidence="1">
    <location>
        <position position="151"/>
    </location>
    <ligand>
        <name>Mn(2+)</name>
        <dbReference type="ChEBI" id="CHEBI:29035"/>
    </ligand>
</feature>
<feature type="binding site" evidence="1">
    <location>
        <position position="153"/>
    </location>
    <ligand>
        <name>Mn(2+)</name>
        <dbReference type="ChEBI" id="CHEBI:29035"/>
    </ligand>
</feature>
<feature type="binding site" evidence="1">
    <location>
        <position position="155"/>
    </location>
    <ligand>
        <name>Mn(2+)</name>
        <dbReference type="ChEBI" id="CHEBI:29035"/>
    </ligand>
</feature>
<feature type="binding site" evidence="1">
    <location>
        <position position="232"/>
    </location>
    <ligand>
        <name>Mn(2+)</name>
        <dbReference type="ChEBI" id="CHEBI:29035"/>
    </ligand>
</feature>
<feature type="binding site" evidence="1">
    <location>
        <position position="234"/>
    </location>
    <ligand>
        <name>Mn(2+)</name>
        <dbReference type="ChEBI" id="CHEBI:29035"/>
    </ligand>
</feature>
<accession>A9M254</accession>
<keyword id="KW-0378">Hydrolase</keyword>
<keyword id="KW-0464">Manganese</keyword>
<keyword id="KW-0479">Metal-binding</keyword>
<keyword id="KW-0620">Polyamine biosynthesis</keyword>
<keyword id="KW-0661">Putrescine biosynthesis</keyword>
<keyword id="KW-0745">Spermidine biosynthesis</keyword>